<protein>
    <recommendedName>
        <fullName>Thrombin-like enzyme BjussuSP-1</fullName>
        <shortName>SVTLE BjussuSP-1</shortName>
        <ecNumber>3.4.21.-</ecNumber>
    </recommendedName>
    <alternativeName>
        <fullName>Fibrinogen-clotting enzyme</fullName>
    </alternativeName>
    <alternativeName>
        <fullName>Jararacussin-I</fullName>
    </alternativeName>
    <alternativeName>
        <fullName>Snake venom serine protease 1</fullName>
        <shortName>SVSP</shortName>
    </alternativeName>
    <alternativeName>
        <fullName>Thrombin-like enzyme BjussuSP-I</fullName>
        <shortName>SVTLE BjussuSP-I</shortName>
    </alternativeName>
</protein>
<dbReference type="EC" id="3.4.21.-"/>
<dbReference type="EMBL" id="DQ307451">
    <property type="protein sequence ID" value="ABC24687.1"/>
    <property type="molecule type" value="mRNA"/>
</dbReference>
<dbReference type="PDB" id="4GSO">
    <property type="method" value="X-ray"/>
    <property type="resolution" value="2.60 A"/>
    <property type="chains" value="A=1-232"/>
</dbReference>
<dbReference type="PDBsum" id="4GSO"/>
<dbReference type="SMR" id="Q2PQJ3"/>
<dbReference type="MEROPS" id="S01.023"/>
<dbReference type="EvolutionaryTrace" id="Q2PQJ3"/>
<dbReference type="GO" id="GO:0005576">
    <property type="term" value="C:extracellular region"/>
    <property type="evidence" value="ECO:0007669"/>
    <property type="project" value="UniProtKB-SubCell"/>
</dbReference>
<dbReference type="GO" id="GO:0030141">
    <property type="term" value="C:secretory granule"/>
    <property type="evidence" value="ECO:0007669"/>
    <property type="project" value="TreeGrafter"/>
</dbReference>
<dbReference type="GO" id="GO:0004252">
    <property type="term" value="F:serine-type endopeptidase activity"/>
    <property type="evidence" value="ECO:0007669"/>
    <property type="project" value="InterPro"/>
</dbReference>
<dbReference type="GO" id="GO:0090729">
    <property type="term" value="F:toxin activity"/>
    <property type="evidence" value="ECO:0007669"/>
    <property type="project" value="UniProtKB-KW"/>
</dbReference>
<dbReference type="GO" id="GO:0006508">
    <property type="term" value="P:proteolysis"/>
    <property type="evidence" value="ECO:0007669"/>
    <property type="project" value="UniProtKB-KW"/>
</dbReference>
<dbReference type="CDD" id="cd00190">
    <property type="entry name" value="Tryp_SPc"/>
    <property type="match status" value="1"/>
</dbReference>
<dbReference type="FunFam" id="2.40.10.10:FF:000158">
    <property type="entry name" value="Thrombin-like enzyme saxthrombin"/>
    <property type="match status" value="1"/>
</dbReference>
<dbReference type="FunFam" id="2.40.10.10:FF:000153">
    <property type="entry name" value="Venom plasminogen activator TSV-PA"/>
    <property type="match status" value="1"/>
</dbReference>
<dbReference type="Gene3D" id="2.40.10.10">
    <property type="entry name" value="Trypsin-like serine proteases"/>
    <property type="match status" value="2"/>
</dbReference>
<dbReference type="InterPro" id="IPR009003">
    <property type="entry name" value="Peptidase_S1_PA"/>
</dbReference>
<dbReference type="InterPro" id="IPR043504">
    <property type="entry name" value="Peptidase_S1_PA_chymotrypsin"/>
</dbReference>
<dbReference type="InterPro" id="IPR001314">
    <property type="entry name" value="Peptidase_S1A"/>
</dbReference>
<dbReference type="InterPro" id="IPR001254">
    <property type="entry name" value="Trypsin_dom"/>
</dbReference>
<dbReference type="InterPro" id="IPR018114">
    <property type="entry name" value="TRYPSIN_HIS"/>
</dbReference>
<dbReference type="InterPro" id="IPR033116">
    <property type="entry name" value="TRYPSIN_SER"/>
</dbReference>
<dbReference type="PANTHER" id="PTHR24271:SF47">
    <property type="entry name" value="KALLIKREIN-1"/>
    <property type="match status" value="1"/>
</dbReference>
<dbReference type="PANTHER" id="PTHR24271">
    <property type="entry name" value="KALLIKREIN-RELATED"/>
    <property type="match status" value="1"/>
</dbReference>
<dbReference type="Pfam" id="PF00089">
    <property type="entry name" value="Trypsin"/>
    <property type="match status" value="1"/>
</dbReference>
<dbReference type="PRINTS" id="PR00722">
    <property type="entry name" value="CHYMOTRYPSIN"/>
</dbReference>
<dbReference type="SMART" id="SM00020">
    <property type="entry name" value="Tryp_SPc"/>
    <property type="match status" value="1"/>
</dbReference>
<dbReference type="SUPFAM" id="SSF50494">
    <property type="entry name" value="Trypsin-like serine proteases"/>
    <property type="match status" value="1"/>
</dbReference>
<dbReference type="PROSITE" id="PS50240">
    <property type="entry name" value="TRYPSIN_DOM"/>
    <property type="match status" value="1"/>
</dbReference>
<dbReference type="PROSITE" id="PS00134">
    <property type="entry name" value="TRYPSIN_HIS"/>
    <property type="match status" value="1"/>
</dbReference>
<dbReference type="PROSITE" id="PS00135">
    <property type="entry name" value="TRYPSIN_SER"/>
    <property type="match status" value="1"/>
</dbReference>
<keyword id="KW-0002">3D-structure</keyword>
<keyword id="KW-1204">Blood coagulation cascade activating toxin</keyword>
<keyword id="KW-0903">Direct protein sequencing</keyword>
<keyword id="KW-1015">Disulfide bond</keyword>
<keyword id="KW-1205">Fibrinolytic toxin</keyword>
<keyword id="KW-0325">Glycoprotein</keyword>
<keyword id="KW-1199">Hemostasis impairing toxin</keyword>
<keyword id="KW-0378">Hydrolase</keyword>
<keyword id="KW-0645">Protease</keyword>
<keyword id="KW-0964">Secreted</keyword>
<keyword id="KW-0720">Serine protease</keyword>
<keyword id="KW-0730">Sialic acid</keyword>
<keyword id="KW-0800">Toxin</keyword>
<evidence type="ECO:0000250" key="1"/>
<evidence type="ECO:0000255" key="2"/>
<evidence type="ECO:0000255" key="3">
    <source>
        <dbReference type="PROSITE-ProRule" id="PRU00274"/>
    </source>
</evidence>
<evidence type="ECO:0000269" key="4">
    <source>
    </source>
</evidence>
<evidence type="ECO:0000269" key="5">
    <source>
    </source>
</evidence>
<evidence type="ECO:0000269" key="6">
    <source>
    </source>
</evidence>
<evidence type="ECO:0000269" key="7">
    <source>
    </source>
</evidence>
<evidence type="ECO:0000305" key="8">
    <source>
    </source>
</evidence>
<evidence type="ECO:0000305" key="9">
    <source>
    </source>
</evidence>
<evidence type="ECO:0007744" key="10">
    <source>
        <dbReference type="PDB" id="4GSO"/>
    </source>
</evidence>
<evidence type="ECO:0007829" key="11">
    <source>
        <dbReference type="PDB" id="4GSO"/>
    </source>
</evidence>
<comment type="function">
    <text evidence="4 5 6">Thrombin-like enzyme that shows clotting activity upon human plasma. Shows specific fibrinogenolytic activity for Aalpha chain (FGA). Hydrolyzes fibrin, BAPNA and TAME, as well as chromogenic artificial substrates of the blood coagulation cascasde: S-27654 for factor X (F10), S-2302 for kallikrein (KLK), factor XIa (F11), and XIIa (F12), and S-2266 for kallikrein and factor XIa (F11). Subcutaneous injection into mice induces a mild edema. Intravenous and intramuscular injection reduce plasma fibrinogen concentration and increase the levels of fibrin(ogen) degradation products. Intramuscular injection also promotes an increase in the expression of proMMP-9, but is unable to activate it.</text>
</comment>
<comment type="activity regulation">
    <text evidence="5 6">Inhibited by leupeptin, heparin, and 1.10-phenantroline.</text>
</comment>
<comment type="subunit">
    <text evidence="5">Monomer.</text>
</comment>
<comment type="subcellular location">
    <subcellularLocation>
        <location>Secreted</location>
    </subcellularLocation>
</comment>
<comment type="tissue specificity">
    <text>Expressed by the venom gland.</text>
</comment>
<comment type="PTM">
    <text evidence="5 6">N-glycosylated. Contains sialic acid residues. Deglycosylation reduces in 50% the formation of fibrin clot.</text>
</comment>
<comment type="miscellaneous">
    <text evidence="8 9">Negative results: does not show hemorrhagic and myotoxic activities (PubMed:17466550), as well as activity on platelet aggregation and plasmin (represented by the chromogenic substrate S-2251) (PubMed:17996740).</text>
</comment>
<comment type="similarity">
    <text evidence="3">Belongs to the peptidase S1 family. Snake venom subfamily.</text>
</comment>
<reference key="1">
    <citation type="journal article" date="2008" name="Biochimie">
        <title>Molecular characterization of BjussuSP-I, a new thrombin-like enzyme with procoagulant and kallikrein-like activity isolated from Bothrops jararacussu snake venom.</title>
        <authorList>
            <person name="Sant'Ana C.D."/>
            <person name="Bernardes C.P."/>
            <person name="Izidoro L.F."/>
            <person name="Mazzi M.V."/>
            <person name="Soares S.G."/>
            <person name="Fuly A.L."/>
            <person name="Zingali R.B."/>
            <person name="Magro A.J."/>
            <person name="Braz A.S."/>
            <person name="Fontes M.R."/>
            <person name="Stabeli R.G."/>
            <person name="Sampaio S.V."/>
            <person name="Soares A.M."/>
        </authorList>
    </citation>
    <scope>NUCLEOTIDE SEQUENCE [MRNA]</scope>
    <scope>FUNCTION</scope>
    <scope>ACTIVITY REGULATION</scope>
    <scope>GLYCOSYLATION</scope>
    <source>
        <tissue>Venom gland</tissue>
    </source>
</reference>
<reference key="2">
    <citation type="journal article" date="2008" name="Comp. Biochem. Physiol.">
        <title>BjussuSP-I: a new thrombin-like enzyme isolated from Bothrops jararacussu snake venom.</title>
        <authorList>
            <person name="Sant'Ana C.D."/>
            <person name="Ticli F.K."/>
            <person name="Oliveira L.L."/>
            <person name="Giglio J.R."/>
            <person name="Rechia C.G."/>
            <person name="Fuly A.L."/>
            <person name="Selistre de Araujo H.S."/>
            <person name="Franco J.J."/>
            <person name="Stabeli R.G."/>
            <person name="Soares A.M."/>
            <person name="Sampaio S.V."/>
        </authorList>
    </citation>
    <scope>PROTEIN SEQUENCE OF 1-20</scope>
    <scope>FUNCTION</scope>
    <scope>SUBUNIT</scope>
    <scope>ACTIVITY REGULATION</scope>
    <scope>GLYCOSYLATION</scope>
    <scope>SIALIC ACID</scope>
    <source>
        <tissue>Venom</tissue>
    </source>
</reference>
<reference key="3">
    <citation type="journal article" date="2007" name="Toxicon">
        <title>Local and systemic pathophysiological alterations induced by a serine proteinase from the venom of the snake Bothrops jararacussu.</title>
        <authorList>
            <person name="Perez A.V."/>
            <person name="Saravia P."/>
            <person name="Rucavado A."/>
            <person name="Sant'Ana C.D."/>
            <person name="Soares A.M."/>
            <person name="Gutierrez J.M."/>
        </authorList>
    </citation>
    <scope>FUNCTION</scope>
    <source>
        <tissue>Venom</tissue>
    </source>
</reference>
<reference key="4">
    <citation type="journal article" date="2013" name="Protein Sci.">
        <title>Crystal structure of jararacussin-I: the highly negatively charged catalytic interface contributes to macromolecular selectivity in snake venom thrombin-like enzymes.</title>
        <authorList>
            <person name="Ullah A."/>
            <person name="Souza T.A."/>
            <person name="Zanphorlin L.M."/>
            <person name="Mariutti R.B."/>
            <person name="Santana V.S."/>
            <person name="Murakami M.T."/>
            <person name="Arni R.K."/>
        </authorList>
    </citation>
    <scope>X-RAY CRYSTALLOGRAPHY (2.6 ANGSTROMS)</scope>
    <scope>DISULFIDE BONDS</scope>
    <source>
        <tissue>Venom</tissue>
    </source>
</reference>
<feature type="chain" id="PRO_0000296362" description="Thrombin-like enzyme BjussuSP-1">
    <location>
        <begin position="1"/>
        <end position="232"/>
    </location>
</feature>
<feature type="domain" description="Peptidase S1" evidence="3">
    <location>
        <begin position="1"/>
        <end position="223"/>
    </location>
</feature>
<feature type="active site" description="Charge relay system" evidence="1">
    <location>
        <position position="40"/>
    </location>
</feature>
<feature type="active site" description="Charge relay system" evidence="1">
    <location>
        <position position="85"/>
    </location>
</feature>
<feature type="active site" description="Charge relay system" evidence="1">
    <location>
        <position position="178"/>
    </location>
</feature>
<feature type="glycosylation site" description="N-linked (GlcNAc...) asparagine" evidence="2">
    <location>
        <position position="77"/>
    </location>
</feature>
<feature type="glycosylation site" description="N-linked (GlcNAc...) asparagine" evidence="2">
    <location>
        <position position="129"/>
    </location>
</feature>
<feature type="disulfide bond" evidence="7 10">
    <location>
        <begin position="7"/>
        <end position="138"/>
    </location>
</feature>
<feature type="disulfide bond" evidence="3 7 10">
    <location>
        <begin position="25"/>
        <end position="41"/>
    </location>
</feature>
<feature type="disulfide bond" evidence="7 10">
    <location>
        <begin position="73"/>
        <end position="230"/>
    </location>
</feature>
<feature type="disulfide bond" evidence="3 7 10">
    <location>
        <begin position="117"/>
        <end position="184"/>
    </location>
</feature>
<feature type="disulfide bond" evidence="3 7 10">
    <location>
        <begin position="149"/>
        <end position="163"/>
    </location>
</feature>
<feature type="disulfide bond" evidence="3 7 10">
    <location>
        <begin position="174"/>
        <end position="199"/>
    </location>
</feature>
<feature type="turn" evidence="11">
    <location>
        <begin position="9"/>
        <end position="11"/>
    </location>
</feature>
<feature type="strand" evidence="11">
    <location>
        <begin position="15"/>
        <end position="29"/>
    </location>
</feature>
<feature type="strand" evidence="11">
    <location>
        <begin position="31"/>
        <end position="37"/>
    </location>
</feature>
<feature type="helix" evidence="11">
    <location>
        <begin position="39"/>
        <end position="41"/>
    </location>
</feature>
<feature type="strand" evidence="11">
    <location>
        <begin position="47"/>
        <end position="51"/>
    </location>
</feature>
<feature type="strand" evidence="11">
    <location>
        <begin position="63"/>
        <end position="65"/>
    </location>
</feature>
<feature type="strand" evidence="11">
    <location>
        <begin position="67"/>
        <end position="72"/>
    </location>
</feature>
<feature type="strand" evidence="11">
    <location>
        <begin position="87"/>
        <end position="93"/>
    </location>
</feature>
<feature type="strand" evidence="11">
    <location>
        <begin position="116"/>
        <end position="123"/>
    </location>
</feature>
<feature type="strand" evidence="11">
    <location>
        <begin position="126"/>
        <end position="129"/>
    </location>
</feature>
<feature type="strand" evidence="11">
    <location>
        <begin position="137"/>
        <end position="143"/>
    </location>
</feature>
<feature type="helix" evidence="11">
    <location>
        <begin position="147"/>
        <end position="150"/>
    </location>
</feature>
<feature type="strand" evidence="11">
    <location>
        <begin position="161"/>
        <end position="165"/>
    </location>
</feature>
<feature type="strand" evidence="11">
    <location>
        <begin position="181"/>
        <end position="184"/>
    </location>
</feature>
<feature type="strand" evidence="11">
    <location>
        <begin position="187"/>
        <end position="194"/>
    </location>
</feature>
<feature type="strand" evidence="11">
    <location>
        <begin position="206"/>
        <end position="210"/>
    </location>
</feature>
<feature type="helix" evidence="11">
    <location>
        <begin position="211"/>
        <end position="214"/>
    </location>
</feature>
<feature type="helix" evidence="11">
    <location>
        <begin position="215"/>
        <end position="223"/>
    </location>
</feature>
<accession>Q2PQJ3</accession>
<proteinExistence type="evidence at protein level"/>
<organism>
    <name type="scientific">Bothrops jararacussu</name>
    <name type="common">Jararacussu</name>
    <dbReference type="NCBI Taxonomy" id="8726"/>
    <lineage>
        <taxon>Eukaryota</taxon>
        <taxon>Metazoa</taxon>
        <taxon>Chordata</taxon>
        <taxon>Craniata</taxon>
        <taxon>Vertebrata</taxon>
        <taxon>Euteleostomi</taxon>
        <taxon>Lepidosauria</taxon>
        <taxon>Squamata</taxon>
        <taxon>Bifurcata</taxon>
        <taxon>Unidentata</taxon>
        <taxon>Episquamata</taxon>
        <taxon>Toxicofera</taxon>
        <taxon>Serpentes</taxon>
        <taxon>Colubroidea</taxon>
        <taxon>Viperidae</taxon>
        <taxon>Crotalinae</taxon>
        <taxon>Bothrops</taxon>
    </lineage>
</organism>
<sequence length="232" mass="25163">VLGGDECDINEHPFLAFLYSHGYFCGLTLINQEWVVTAAHCDSTNFQMQLGVHSKKVLNEDEQTRNPKEKFICPNKNMSEVLDKDIMLIKLDKPISNSKHIAPLSLPSNPPSVGSVCRIMGWGSITIPNETYPDVPYCANINLVDYEVCQGAYNGLPAKTTLCAGVLEGGKDTCVGDSGGPLICNGQFQGIVSYGAHSCGQGPKPGIYTNVFDYTDWIQRNIAGNTDATCPP</sequence>
<name>VSP1_BOTJR</name>